<accession>B7JH18</accession>
<dbReference type="EC" id="4.2.3.3" evidence="1"/>
<dbReference type="EMBL" id="CP001283">
    <property type="protein sequence ID" value="ACK92070.1"/>
    <property type="molecule type" value="Genomic_DNA"/>
</dbReference>
<dbReference type="RefSeq" id="WP_000684755.1">
    <property type="nucleotide sequence ID" value="NC_011773.1"/>
</dbReference>
<dbReference type="SMR" id="B7JH18"/>
<dbReference type="KEGG" id="bcu:BCAH820_1627"/>
<dbReference type="HOGENOM" id="CLU_120420_1_0_9"/>
<dbReference type="Proteomes" id="UP000001363">
    <property type="component" value="Chromosome"/>
</dbReference>
<dbReference type="GO" id="GO:0005829">
    <property type="term" value="C:cytosol"/>
    <property type="evidence" value="ECO:0007669"/>
    <property type="project" value="TreeGrafter"/>
</dbReference>
<dbReference type="GO" id="GO:0008929">
    <property type="term" value="F:methylglyoxal synthase activity"/>
    <property type="evidence" value="ECO:0007669"/>
    <property type="project" value="UniProtKB-UniRule"/>
</dbReference>
<dbReference type="GO" id="GO:0019242">
    <property type="term" value="P:methylglyoxal biosynthetic process"/>
    <property type="evidence" value="ECO:0007669"/>
    <property type="project" value="UniProtKB-UniRule"/>
</dbReference>
<dbReference type="CDD" id="cd01422">
    <property type="entry name" value="MGS"/>
    <property type="match status" value="1"/>
</dbReference>
<dbReference type="FunFam" id="3.40.50.1380:FF:000006">
    <property type="entry name" value="Methylglyoxal synthase"/>
    <property type="match status" value="1"/>
</dbReference>
<dbReference type="Gene3D" id="3.40.50.1380">
    <property type="entry name" value="Methylglyoxal synthase-like domain"/>
    <property type="match status" value="1"/>
</dbReference>
<dbReference type="HAMAP" id="MF_00549">
    <property type="entry name" value="Methylglyoxal_synth"/>
    <property type="match status" value="1"/>
</dbReference>
<dbReference type="InterPro" id="IPR004363">
    <property type="entry name" value="Methylgl_synth"/>
</dbReference>
<dbReference type="InterPro" id="IPR018148">
    <property type="entry name" value="Methylglyoxal_synth_AS"/>
</dbReference>
<dbReference type="InterPro" id="IPR011607">
    <property type="entry name" value="MGS-like_dom"/>
</dbReference>
<dbReference type="InterPro" id="IPR036914">
    <property type="entry name" value="MGS-like_dom_sf"/>
</dbReference>
<dbReference type="NCBIfam" id="TIGR00160">
    <property type="entry name" value="MGSA"/>
    <property type="match status" value="1"/>
</dbReference>
<dbReference type="NCBIfam" id="NF003559">
    <property type="entry name" value="PRK05234.1"/>
    <property type="match status" value="1"/>
</dbReference>
<dbReference type="PANTHER" id="PTHR30492">
    <property type="entry name" value="METHYLGLYOXAL SYNTHASE"/>
    <property type="match status" value="1"/>
</dbReference>
<dbReference type="PANTHER" id="PTHR30492:SF0">
    <property type="entry name" value="METHYLGLYOXAL SYNTHASE"/>
    <property type="match status" value="1"/>
</dbReference>
<dbReference type="Pfam" id="PF02142">
    <property type="entry name" value="MGS"/>
    <property type="match status" value="1"/>
</dbReference>
<dbReference type="PIRSF" id="PIRSF006614">
    <property type="entry name" value="Methylglyox_syn"/>
    <property type="match status" value="1"/>
</dbReference>
<dbReference type="SMART" id="SM00851">
    <property type="entry name" value="MGS"/>
    <property type="match status" value="1"/>
</dbReference>
<dbReference type="SUPFAM" id="SSF52335">
    <property type="entry name" value="Methylglyoxal synthase-like"/>
    <property type="match status" value="1"/>
</dbReference>
<dbReference type="PROSITE" id="PS01335">
    <property type="entry name" value="METHYLGLYOXAL_SYNTH"/>
    <property type="match status" value="1"/>
</dbReference>
<dbReference type="PROSITE" id="PS51855">
    <property type="entry name" value="MGS"/>
    <property type="match status" value="1"/>
</dbReference>
<feature type="chain" id="PRO_1000128973" description="Methylglyoxal synthase">
    <location>
        <begin position="1"/>
        <end position="131"/>
    </location>
</feature>
<feature type="domain" description="MGS-like" evidence="1">
    <location>
        <begin position="1"/>
        <end position="131"/>
    </location>
</feature>
<feature type="active site" description="Proton donor/acceptor" evidence="1">
    <location>
        <position position="60"/>
    </location>
</feature>
<feature type="binding site" evidence="1">
    <location>
        <position position="8"/>
    </location>
    <ligand>
        <name>substrate</name>
    </ligand>
</feature>
<feature type="binding site" evidence="1">
    <location>
        <position position="12"/>
    </location>
    <ligand>
        <name>substrate</name>
    </ligand>
</feature>
<feature type="binding site" evidence="1">
    <location>
        <begin position="34"/>
        <end position="37"/>
    </location>
    <ligand>
        <name>substrate</name>
    </ligand>
</feature>
<feature type="binding site" evidence="1">
    <location>
        <begin position="54"/>
        <end position="55"/>
    </location>
    <ligand>
        <name>substrate</name>
    </ligand>
</feature>
<feature type="binding site" evidence="1">
    <location>
        <position position="87"/>
    </location>
    <ligand>
        <name>substrate</name>
    </ligand>
</feature>
<reference key="1">
    <citation type="submission" date="2008-10" db="EMBL/GenBank/DDBJ databases">
        <title>Genome sequence of Bacillus cereus AH820.</title>
        <authorList>
            <person name="Dodson R.J."/>
            <person name="Durkin A.S."/>
            <person name="Rosovitz M.J."/>
            <person name="Rasko D.A."/>
            <person name="Hoffmaster A."/>
            <person name="Ravel J."/>
            <person name="Sutton G."/>
        </authorList>
    </citation>
    <scope>NUCLEOTIDE SEQUENCE [LARGE SCALE GENOMIC DNA]</scope>
    <source>
        <strain>AH820</strain>
    </source>
</reference>
<organism>
    <name type="scientific">Bacillus cereus (strain AH820)</name>
    <dbReference type="NCBI Taxonomy" id="405535"/>
    <lineage>
        <taxon>Bacteria</taxon>
        <taxon>Bacillati</taxon>
        <taxon>Bacillota</taxon>
        <taxon>Bacilli</taxon>
        <taxon>Bacillales</taxon>
        <taxon>Bacillaceae</taxon>
        <taxon>Bacillus</taxon>
        <taxon>Bacillus cereus group</taxon>
    </lineage>
</organism>
<keyword id="KW-0456">Lyase</keyword>
<gene>
    <name evidence="1" type="primary">mgsA</name>
    <name type="ordered locus">BCAH820_1627</name>
</gene>
<comment type="function">
    <text evidence="1">Catalyzes the formation of methylglyoxal from dihydroxyacetone phosphate.</text>
</comment>
<comment type="catalytic activity">
    <reaction evidence="1">
        <text>dihydroxyacetone phosphate = methylglyoxal + phosphate</text>
        <dbReference type="Rhea" id="RHEA:17937"/>
        <dbReference type="ChEBI" id="CHEBI:17158"/>
        <dbReference type="ChEBI" id="CHEBI:43474"/>
        <dbReference type="ChEBI" id="CHEBI:57642"/>
        <dbReference type="EC" id="4.2.3.3"/>
    </reaction>
</comment>
<comment type="similarity">
    <text evidence="1">Belongs to the methylglyoxal synthase family.</text>
</comment>
<sequence>MKIALIAHDKKKDDMVSFAYAYKPIFEQHELFATGTTGLRIMEATGLVVTRYQSGPLGGDQEIGAMIAKNDLDMVIFFRDPLTAQPHEPDVNALLRLCDVYAIPLATNMASAEMLMHALERGDLDYRKLRK</sequence>
<name>MGSA_BACC0</name>
<protein>
    <recommendedName>
        <fullName evidence="1">Methylglyoxal synthase</fullName>
        <shortName evidence="1">MGS</shortName>
        <ecNumber evidence="1">4.2.3.3</ecNumber>
    </recommendedName>
</protein>
<evidence type="ECO:0000255" key="1">
    <source>
        <dbReference type="HAMAP-Rule" id="MF_00549"/>
    </source>
</evidence>
<proteinExistence type="inferred from homology"/>